<reference key="1">
    <citation type="submission" date="2006-06" db="EMBL/GenBank/DDBJ databases">
        <title>Complete sequence of Rubrobacter xylanophilus DSM 9941.</title>
        <authorList>
            <consortium name="US DOE Joint Genome Institute"/>
            <person name="Copeland A."/>
            <person name="Lucas S."/>
            <person name="Lapidus A."/>
            <person name="Barry K."/>
            <person name="Detter J.C."/>
            <person name="Glavina del Rio T."/>
            <person name="Hammon N."/>
            <person name="Israni S."/>
            <person name="Dalin E."/>
            <person name="Tice H."/>
            <person name="Pitluck S."/>
            <person name="Munk A.C."/>
            <person name="Brettin T."/>
            <person name="Bruce D."/>
            <person name="Han C."/>
            <person name="Tapia R."/>
            <person name="Gilna P."/>
            <person name="Schmutz J."/>
            <person name="Larimer F."/>
            <person name="Land M."/>
            <person name="Hauser L."/>
            <person name="Kyrpides N."/>
            <person name="Lykidis A."/>
            <person name="da Costa M.S."/>
            <person name="Rainey F.A."/>
            <person name="Empadinhas N."/>
            <person name="Jolivet E."/>
            <person name="Battista J.R."/>
            <person name="Richardson P."/>
        </authorList>
    </citation>
    <scope>NUCLEOTIDE SEQUENCE [LARGE SCALE GENOMIC DNA]</scope>
    <source>
        <strain>DSM 9941 / JCM 11954 / NBRC 16129 / PRD-1</strain>
    </source>
</reference>
<protein>
    <recommendedName>
        <fullName evidence="1">ATP synthase subunit delta</fullName>
    </recommendedName>
    <alternativeName>
        <fullName evidence="1">ATP synthase F(1) sector subunit delta</fullName>
    </alternativeName>
    <alternativeName>
        <fullName evidence="1">F-type ATPase subunit delta</fullName>
        <shortName evidence="1">F-ATPase subunit delta</shortName>
    </alternativeName>
</protein>
<gene>
    <name evidence="1" type="primary">atpH</name>
    <name type="ordered locus">Rxyl_1641</name>
</gene>
<organism>
    <name type="scientific">Rubrobacter xylanophilus (strain DSM 9941 / JCM 11954 / NBRC 16129 / PRD-1)</name>
    <dbReference type="NCBI Taxonomy" id="266117"/>
    <lineage>
        <taxon>Bacteria</taxon>
        <taxon>Bacillati</taxon>
        <taxon>Actinomycetota</taxon>
        <taxon>Rubrobacteria</taxon>
        <taxon>Rubrobacterales</taxon>
        <taxon>Rubrobacteraceae</taxon>
        <taxon>Rubrobacter</taxon>
    </lineage>
</organism>
<evidence type="ECO:0000255" key="1">
    <source>
        <dbReference type="HAMAP-Rule" id="MF_01416"/>
    </source>
</evidence>
<dbReference type="EMBL" id="CP000386">
    <property type="protein sequence ID" value="ABG04602.1"/>
    <property type="molecule type" value="Genomic_DNA"/>
</dbReference>
<dbReference type="RefSeq" id="WP_011564619.1">
    <property type="nucleotide sequence ID" value="NC_008148.1"/>
</dbReference>
<dbReference type="SMR" id="Q1AVH6"/>
<dbReference type="STRING" id="266117.Rxyl_1641"/>
<dbReference type="KEGG" id="rxy:Rxyl_1641"/>
<dbReference type="eggNOG" id="COG0712">
    <property type="taxonomic scope" value="Bacteria"/>
</dbReference>
<dbReference type="HOGENOM" id="CLU_085114_0_1_11"/>
<dbReference type="OrthoDB" id="5242917at2"/>
<dbReference type="PhylomeDB" id="Q1AVH6"/>
<dbReference type="Proteomes" id="UP000006637">
    <property type="component" value="Chromosome"/>
</dbReference>
<dbReference type="GO" id="GO:0005886">
    <property type="term" value="C:plasma membrane"/>
    <property type="evidence" value="ECO:0007669"/>
    <property type="project" value="UniProtKB-SubCell"/>
</dbReference>
<dbReference type="GO" id="GO:0045259">
    <property type="term" value="C:proton-transporting ATP synthase complex"/>
    <property type="evidence" value="ECO:0007669"/>
    <property type="project" value="UniProtKB-KW"/>
</dbReference>
<dbReference type="GO" id="GO:0046933">
    <property type="term" value="F:proton-transporting ATP synthase activity, rotational mechanism"/>
    <property type="evidence" value="ECO:0007669"/>
    <property type="project" value="UniProtKB-UniRule"/>
</dbReference>
<dbReference type="Gene3D" id="1.10.520.20">
    <property type="entry name" value="N-terminal domain of the delta subunit of the F1F0-ATP synthase"/>
    <property type="match status" value="1"/>
</dbReference>
<dbReference type="HAMAP" id="MF_01416">
    <property type="entry name" value="ATP_synth_delta_bact"/>
    <property type="match status" value="1"/>
</dbReference>
<dbReference type="InterPro" id="IPR026015">
    <property type="entry name" value="ATP_synth_OSCP/delta_N_sf"/>
</dbReference>
<dbReference type="InterPro" id="IPR000711">
    <property type="entry name" value="ATPase_OSCP/dsu"/>
</dbReference>
<dbReference type="NCBIfam" id="TIGR01145">
    <property type="entry name" value="ATP_synt_delta"/>
    <property type="match status" value="1"/>
</dbReference>
<dbReference type="PANTHER" id="PTHR11910">
    <property type="entry name" value="ATP SYNTHASE DELTA CHAIN"/>
    <property type="match status" value="1"/>
</dbReference>
<dbReference type="Pfam" id="PF00213">
    <property type="entry name" value="OSCP"/>
    <property type="match status" value="1"/>
</dbReference>
<dbReference type="PRINTS" id="PR00125">
    <property type="entry name" value="ATPASEDELTA"/>
</dbReference>
<dbReference type="SUPFAM" id="SSF47928">
    <property type="entry name" value="N-terminal domain of the delta subunit of the F1F0-ATP synthase"/>
    <property type="match status" value="1"/>
</dbReference>
<name>ATPD_RUBXD</name>
<comment type="function">
    <text evidence="1">F(1)F(0) ATP synthase produces ATP from ADP in the presence of a proton or sodium gradient. F-type ATPases consist of two structural domains, F(1) containing the extramembraneous catalytic core and F(0) containing the membrane proton channel, linked together by a central stalk and a peripheral stalk. During catalysis, ATP synthesis in the catalytic domain of F(1) is coupled via a rotary mechanism of the central stalk subunits to proton translocation.</text>
</comment>
<comment type="function">
    <text evidence="1">This protein is part of the stalk that links CF(0) to CF(1). It either transmits conformational changes from CF(0) to CF(1) or is implicated in proton conduction.</text>
</comment>
<comment type="subunit">
    <text evidence="1">F-type ATPases have 2 components, F(1) - the catalytic core - and F(0) - the membrane proton channel. F(1) has five subunits: alpha(3), beta(3), gamma(1), delta(1), epsilon(1). F(0) has three main subunits: a(1), b(2) and c(10-14). The alpha and beta chains form an alternating ring which encloses part of the gamma chain. F(1) is attached to F(0) by a central stalk formed by the gamma and epsilon chains, while a peripheral stalk is formed by the delta and b chains.</text>
</comment>
<comment type="subcellular location">
    <subcellularLocation>
        <location evidence="1">Cell membrane</location>
        <topology evidence="1">Peripheral membrane protein</topology>
    </subcellularLocation>
</comment>
<comment type="similarity">
    <text evidence="1">Belongs to the ATPase delta chain family.</text>
</comment>
<accession>Q1AVH6</accession>
<keyword id="KW-0066">ATP synthesis</keyword>
<keyword id="KW-1003">Cell membrane</keyword>
<keyword id="KW-0139">CF(1)</keyword>
<keyword id="KW-0375">Hydrogen ion transport</keyword>
<keyword id="KW-0406">Ion transport</keyword>
<keyword id="KW-0472">Membrane</keyword>
<keyword id="KW-1185">Reference proteome</keyword>
<keyword id="KW-0813">Transport</keyword>
<sequence>MSAVSTYAEALFGAAREKDELERVLDDLREFCRALRESEELALFFYGEQIPEREKRRAIEALTEGMSPLTTNFLKVLCDNRREEILEDVLRRYEEMVEDHLGRIEVEVVTATELSGEMQERIRERIARVLGGREVILRTSVDPEILGGAVFRFKDRLVDSSIRGRLEGLREAMLERGVV</sequence>
<feature type="chain" id="PRO_0000371106" description="ATP synthase subunit delta">
    <location>
        <begin position="1"/>
        <end position="179"/>
    </location>
</feature>
<proteinExistence type="inferred from homology"/>